<name>KA172_LYCMC</name>
<comment type="function">
    <text evidence="1">Inhibits voltage-gated potassium channels.</text>
</comment>
<comment type="subcellular location">
    <subcellularLocation>
        <location evidence="1">Secreted</location>
    </subcellularLocation>
</comment>
<comment type="tissue specificity">
    <text>Expressed by the venom gland.</text>
</comment>
<comment type="domain">
    <text evidence="2">Has the structural arrangement of an alpha-helix connected to antiparallel beta-sheets by disulfide bonds (CS-alpha/beta).</text>
</comment>
<comment type="similarity">
    <text evidence="2">Belongs to the short scorpion toxin superfamily. Potassium channel inhibitor family. Alpha-KTx 17 subfamily.</text>
</comment>
<feature type="signal peptide" evidence="1">
    <location>
        <begin position="1"/>
        <end position="26"/>
    </location>
</feature>
<feature type="chain" id="PRO_0000403830" description="Potassium channel toxin alpha-KTx 17.2">
    <location>
        <begin position="27"/>
        <end position="57"/>
    </location>
</feature>
<feature type="disulfide bond" evidence="1">
    <location>
        <begin position="30"/>
        <end position="46"/>
    </location>
</feature>
<feature type="disulfide bond" evidence="1">
    <location>
        <begin position="36"/>
        <end position="51"/>
    </location>
</feature>
<feature type="disulfide bond" evidence="1">
    <location>
        <begin position="40"/>
        <end position="53"/>
    </location>
</feature>
<evidence type="ECO:0000250" key="1"/>
<evidence type="ECO:0000305" key="2"/>
<accession>P0CI46</accession>
<organism>
    <name type="scientific">Lychas mucronatus</name>
    <name type="common">Chinese swimming scorpion</name>
    <dbReference type="NCBI Taxonomy" id="172552"/>
    <lineage>
        <taxon>Eukaryota</taxon>
        <taxon>Metazoa</taxon>
        <taxon>Ecdysozoa</taxon>
        <taxon>Arthropoda</taxon>
        <taxon>Chelicerata</taxon>
        <taxon>Arachnida</taxon>
        <taxon>Scorpiones</taxon>
        <taxon>Buthida</taxon>
        <taxon>Buthoidea</taxon>
        <taxon>Buthidae</taxon>
        <taxon>Lychas</taxon>
    </lineage>
</organism>
<dbReference type="EMBL" id="GT028874">
    <property type="status" value="NOT_ANNOTATED_CDS"/>
    <property type="molecule type" value="mRNA"/>
</dbReference>
<dbReference type="SMR" id="P0CI46"/>
<dbReference type="GO" id="GO:0005576">
    <property type="term" value="C:extracellular region"/>
    <property type="evidence" value="ECO:0007669"/>
    <property type="project" value="UniProtKB-SubCell"/>
</dbReference>
<dbReference type="GO" id="GO:0015459">
    <property type="term" value="F:potassium channel regulator activity"/>
    <property type="evidence" value="ECO:0007669"/>
    <property type="project" value="UniProtKB-KW"/>
</dbReference>
<dbReference type="GO" id="GO:0090729">
    <property type="term" value="F:toxin activity"/>
    <property type="evidence" value="ECO:0007669"/>
    <property type="project" value="UniProtKB-KW"/>
</dbReference>
<sequence>MKTIIVLLLLTIVAAAVVESSPKARRQTECQIKNDCQRYCQSVKECKYGKCYCNYAG</sequence>
<protein>
    <recommendedName>
        <fullName>Potassium channel toxin alpha-KTx 17.2</fullName>
    </recommendedName>
</protein>
<reference key="1">
    <citation type="journal article" date="2010" name="BMC Genomics">
        <title>Comparative venom gland transcriptome analysis of the scorpion Lychas mucronatus reveals intraspecific toxic gene diversity and new venomous components.</title>
        <authorList>
            <person name="Zhao R."/>
            <person name="Ma Y."/>
            <person name="He Y."/>
            <person name="Di Z."/>
            <person name="Wu Y.-L."/>
            <person name="Cao Z.-J."/>
            <person name="Li W.-X."/>
        </authorList>
    </citation>
    <scope>NUCLEOTIDE SEQUENCE [MRNA]</scope>
    <source>
        <strain>Yunnan</strain>
        <tissue>Venom gland</tissue>
    </source>
</reference>
<keyword id="KW-1015">Disulfide bond</keyword>
<keyword id="KW-0872">Ion channel impairing toxin</keyword>
<keyword id="KW-0528">Neurotoxin</keyword>
<keyword id="KW-0632">Potassium channel impairing toxin</keyword>
<keyword id="KW-0964">Secreted</keyword>
<keyword id="KW-0732">Signal</keyword>
<keyword id="KW-0800">Toxin</keyword>
<proteinExistence type="evidence at transcript level"/>